<sequence>MNLPSPAPPTLVLASSSPYRAELLARLGLPFEICAPDIDETPLPQEQPEGLVARLAETKARVVGAKSPNALVIGSDQVAVLGQQILGKPKTHERALQQLRAASGQTVFFYTGLCLVNTLMGEAKTVVEPFQVQFRQLTEQQIDNYLQREQPYQCAGSFRSEGLGIALIQHLQGDDPNALVGLPLIRLTELLEQAGYPVL</sequence>
<name>NTPPB_NITOC</name>
<reference key="1">
    <citation type="journal article" date="2006" name="Appl. Environ. Microbiol.">
        <title>Complete genome sequence of the marine, chemolithoautotrophic, ammonia-oxidizing bacterium Nitrosococcus oceani ATCC 19707.</title>
        <authorList>
            <person name="Klotz M.G."/>
            <person name="Arp D.J."/>
            <person name="Chain P.S.G."/>
            <person name="El-Sheikh A.F."/>
            <person name="Hauser L.J."/>
            <person name="Hommes N.G."/>
            <person name="Larimer F.W."/>
            <person name="Malfatti S.A."/>
            <person name="Norton J.M."/>
            <person name="Poret-Peterson A.T."/>
            <person name="Vergez L.M."/>
            <person name="Ward B.B."/>
        </authorList>
    </citation>
    <scope>NUCLEOTIDE SEQUENCE [LARGE SCALE GENOMIC DNA]</scope>
    <source>
        <strain>ATCC 19707 / BCRC 17464 / JCM 30415 / NCIMB 11848 / C-107</strain>
    </source>
</reference>
<accession>Q3JAF4</accession>
<comment type="function">
    <text evidence="1">Nucleoside triphosphate pyrophosphatase that hydrolyzes 7-methyl-GTP (m(7)GTP). May have a dual role in cell division arrest and in preventing the incorporation of modified nucleotides into cellular nucleic acids.</text>
</comment>
<comment type="catalytic activity">
    <reaction evidence="1">
        <text>N(7)-methyl-GTP + H2O = N(7)-methyl-GMP + diphosphate + H(+)</text>
        <dbReference type="Rhea" id="RHEA:58744"/>
        <dbReference type="ChEBI" id="CHEBI:15377"/>
        <dbReference type="ChEBI" id="CHEBI:15378"/>
        <dbReference type="ChEBI" id="CHEBI:33019"/>
        <dbReference type="ChEBI" id="CHEBI:58285"/>
        <dbReference type="ChEBI" id="CHEBI:87133"/>
    </reaction>
</comment>
<comment type="cofactor">
    <cofactor evidence="1">
        <name>a divalent metal cation</name>
        <dbReference type="ChEBI" id="CHEBI:60240"/>
    </cofactor>
</comment>
<comment type="subcellular location">
    <subcellularLocation>
        <location evidence="1">Cytoplasm</location>
    </subcellularLocation>
</comment>
<comment type="similarity">
    <text evidence="1">Belongs to the Maf family. YceF subfamily.</text>
</comment>
<keyword id="KW-0963">Cytoplasm</keyword>
<keyword id="KW-0378">Hydrolase</keyword>
<keyword id="KW-0546">Nucleotide metabolism</keyword>
<keyword id="KW-1185">Reference proteome</keyword>
<evidence type="ECO:0000255" key="1">
    <source>
        <dbReference type="HAMAP-Rule" id="MF_00528"/>
    </source>
</evidence>
<gene>
    <name type="ordered locus">Noc_1720</name>
</gene>
<feature type="chain" id="PRO_0000267355" description="7-methyl-GTP pyrophosphatase">
    <location>
        <begin position="1"/>
        <end position="199"/>
    </location>
</feature>
<feature type="active site" description="Proton acceptor" evidence="1">
    <location>
        <position position="76"/>
    </location>
</feature>
<feature type="site" description="Important for substrate specificity" evidence="1">
    <location>
        <position position="19"/>
    </location>
</feature>
<feature type="site" description="Important for substrate specificity" evidence="1">
    <location>
        <position position="77"/>
    </location>
</feature>
<feature type="site" description="Important for substrate specificity" evidence="1">
    <location>
        <position position="161"/>
    </location>
</feature>
<protein>
    <recommendedName>
        <fullName evidence="1">7-methyl-GTP pyrophosphatase</fullName>
        <shortName evidence="1">m(7)GTP pyrophosphatase</shortName>
        <ecNumber evidence="1">3.6.1.-</ecNumber>
    </recommendedName>
</protein>
<organism>
    <name type="scientific">Nitrosococcus oceani (strain ATCC 19707 / BCRC 17464 / JCM 30415 / NCIMB 11848 / C-107)</name>
    <dbReference type="NCBI Taxonomy" id="323261"/>
    <lineage>
        <taxon>Bacteria</taxon>
        <taxon>Pseudomonadati</taxon>
        <taxon>Pseudomonadota</taxon>
        <taxon>Gammaproteobacteria</taxon>
        <taxon>Chromatiales</taxon>
        <taxon>Chromatiaceae</taxon>
        <taxon>Nitrosococcus</taxon>
    </lineage>
</organism>
<proteinExistence type="inferred from homology"/>
<dbReference type="EC" id="3.6.1.-" evidence="1"/>
<dbReference type="EMBL" id="CP000127">
    <property type="protein sequence ID" value="ABA58192.1"/>
    <property type="molecule type" value="Genomic_DNA"/>
</dbReference>
<dbReference type="RefSeq" id="WP_002809357.1">
    <property type="nucleotide sequence ID" value="NC_007484.1"/>
</dbReference>
<dbReference type="SMR" id="Q3JAF4"/>
<dbReference type="FunCoup" id="Q3JAF4">
    <property type="interactions" value="97"/>
</dbReference>
<dbReference type="STRING" id="323261.Noc_1720"/>
<dbReference type="KEGG" id="noc:Noc_1720"/>
<dbReference type="eggNOG" id="COG0424">
    <property type="taxonomic scope" value="Bacteria"/>
</dbReference>
<dbReference type="HOGENOM" id="CLU_040416_1_0_6"/>
<dbReference type="InParanoid" id="Q3JAF4"/>
<dbReference type="Proteomes" id="UP000006838">
    <property type="component" value="Chromosome"/>
</dbReference>
<dbReference type="GO" id="GO:0005737">
    <property type="term" value="C:cytoplasm"/>
    <property type="evidence" value="ECO:0007669"/>
    <property type="project" value="UniProtKB-SubCell"/>
</dbReference>
<dbReference type="GO" id="GO:0047429">
    <property type="term" value="F:nucleoside triphosphate diphosphatase activity"/>
    <property type="evidence" value="ECO:0007669"/>
    <property type="project" value="InterPro"/>
</dbReference>
<dbReference type="GO" id="GO:0009117">
    <property type="term" value="P:nucleotide metabolic process"/>
    <property type="evidence" value="ECO:0007669"/>
    <property type="project" value="UniProtKB-KW"/>
</dbReference>
<dbReference type="CDD" id="cd00555">
    <property type="entry name" value="Maf"/>
    <property type="match status" value="1"/>
</dbReference>
<dbReference type="FunFam" id="3.90.950.10:FF:000005">
    <property type="entry name" value="7-methyl-GTP pyrophosphatase"/>
    <property type="match status" value="1"/>
</dbReference>
<dbReference type="Gene3D" id="3.90.950.10">
    <property type="match status" value="1"/>
</dbReference>
<dbReference type="HAMAP" id="MF_00528">
    <property type="entry name" value="Maf"/>
    <property type="match status" value="1"/>
</dbReference>
<dbReference type="InterPro" id="IPR029001">
    <property type="entry name" value="ITPase-like_fam"/>
</dbReference>
<dbReference type="InterPro" id="IPR003697">
    <property type="entry name" value="Maf-like"/>
</dbReference>
<dbReference type="NCBIfam" id="TIGR00172">
    <property type="entry name" value="maf"/>
    <property type="match status" value="1"/>
</dbReference>
<dbReference type="PANTHER" id="PTHR43213:SF10">
    <property type="entry name" value="7-METHYL-GTP PYROPHOSPHATASE"/>
    <property type="match status" value="1"/>
</dbReference>
<dbReference type="PANTHER" id="PTHR43213">
    <property type="entry name" value="BIFUNCTIONAL DTTP/UTP PYROPHOSPHATASE/METHYLTRANSFERASE PROTEIN-RELATED"/>
    <property type="match status" value="1"/>
</dbReference>
<dbReference type="Pfam" id="PF02545">
    <property type="entry name" value="Maf"/>
    <property type="match status" value="1"/>
</dbReference>
<dbReference type="PIRSF" id="PIRSF006305">
    <property type="entry name" value="Maf"/>
    <property type="match status" value="1"/>
</dbReference>
<dbReference type="SUPFAM" id="SSF52972">
    <property type="entry name" value="ITPase-like"/>
    <property type="match status" value="1"/>
</dbReference>